<sequence>MSRIGKRIIEIPSSVQASVEGSKLLFKNNKEKHELETHNRVKITLENNQLSFQPIGEDVQSRAYWGTYGALANNIVIGLSTGFSKTLEVNGVGYKVALGNKTLDLSLGFSHPVKYPIPAGIEMVVEKNTITIKGSDKQKVGQVAAEIRSFRPPEPYKGKGVKYSDEVIIRKAGKTAKK</sequence>
<feature type="chain" id="PRO_1000055239" description="Large ribosomal subunit protein uL6">
    <location>
        <begin position="1"/>
        <end position="178"/>
    </location>
</feature>
<proteinExistence type="inferred from homology"/>
<organism>
    <name type="scientific">Helicobacter acinonychis (strain Sheeba)</name>
    <dbReference type="NCBI Taxonomy" id="382638"/>
    <lineage>
        <taxon>Bacteria</taxon>
        <taxon>Pseudomonadati</taxon>
        <taxon>Campylobacterota</taxon>
        <taxon>Epsilonproteobacteria</taxon>
        <taxon>Campylobacterales</taxon>
        <taxon>Helicobacteraceae</taxon>
        <taxon>Helicobacter</taxon>
    </lineage>
</organism>
<gene>
    <name evidence="1" type="primary">rplF</name>
    <name type="ordered locus">Hac_0150</name>
</gene>
<protein>
    <recommendedName>
        <fullName evidence="1">Large ribosomal subunit protein uL6</fullName>
    </recommendedName>
    <alternativeName>
        <fullName evidence="2">50S ribosomal protein L6</fullName>
    </alternativeName>
</protein>
<reference key="1">
    <citation type="journal article" date="2006" name="PLoS Genet.">
        <title>Who ate whom? Adaptive Helicobacter genomic changes that accompanied a host jump from early humans to large felines.</title>
        <authorList>
            <person name="Eppinger M."/>
            <person name="Baar C."/>
            <person name="Linz B."/>
            <person name="Raddatz G."/>
            <person name="Lanz C."/>
            <person name="Keller H."/>
            <person name="Morelli G."/>
            <person name="Gressmann H."/>
            <person name="Achtman M."/>
            <person name="Schuster S.C."/>
        </authorList>
    </citation>
    <scope>NUCLEOTIDE SEQUENCE [LARGE SCALE GENOMIC DNA]</scope>
    <source>
        <strain>Sheeba</strain>
    </source>
</reference>
<dbReference type="EMBL" id="AM260522">
    <property type="protein sequence ID" value="CAJ99002.1"/>
    <property type="molecule type" value="Genomic_DNA"/>
</dbReference>
<dbReference type="RefSeq" id="WP_011577120.1">
    <property type="nucleotide sequence ID" value="NC_008229.1"/>
</dbReference>
<dbReference type="SMR" id="Q17ZC4"/>
<dbReference type="STRING" id="382638.Hac_0150"/>
<dbReference type="GeneID" id="31757680"/>
<dbReference type="KEGG" id="hac:Hac_0150"/>
<dbReference type="eggNOG" id="COG0097">
    <property type="taxonomic scope" value="Bacteria"/>
</dbReference>
<dbReference type="HOGENOM" id="CLU_065464_1_2_7"/>
<dbReference type="OrthoDB" id="9805007at2"/>
<dbReference type="BioCyc" id="HACI382638:HAC_RS00655-MONOMER"/>
<dbReference type="Proteomes" id="UP000000775">
    <property type="component" value="Chromosome"/>
</dbReference>
<dbReference type="GO" id="GO:0022625">
    <property type="term" value="C:cytosolic large ribosomal subunit"/>
    <property type="evidence" value="ECO:0007669"/>
    <property type="project" value="TreeGrafter"/>
</dbReference>
<dbReference type="GO" id="GO:0019843">
    <property type="term" value="F:rRNA binding"/>
    <property type="evidence" value="ECO:0007669"/>
    <property type="project" value="UniProtKB-UniRule"/>
</dbReference>
<dbReference type="GO" id="GO:0003735">
    <property type="term" value="F:structural constituent of ribosome"/>
    <property type="evidence" value="ECO:0007669"/>
    <property type="project" value="InterPro"/>
</dbReference>
<dbReference type="GO" id="GO:0002181">
    <property type="term" value="P:cytoplasmic translation"/>
    <property type="evidence" value="ECO:0007669"/>
    <property type="project" value="TreeGrafter"/>
</dbReference>
<dbReference type="FunFam" id="3.90.930.12:FF:000001">
    <property type="entry name" value="50S ribosomal protein L6"/>
    <property type="match status" value="1"/>
</dbReference>
<dbReference type="Gene3D" id="3.90.930.12">
    <property type="entry name" value="Ribosomal protein L6, alpha-beta domain"/>
    <property type="match status" value="2"/>
</dbReference>
<dbReference type="HAMAP" id="MF_01365_B">
    <property type="entry name" value="Ribosomal_uL6_B"/>
    <property type="match status" value="1"/>
</dbReference>
<dbReference type="InterPro" id="IPR000702">
    <property type="entry name" value="Ribosomal_uL6-like"/>
</dbReference>
<dbReference type="InterPro" id="IPR036789">
    <property type="entry name" value="Ribosomal_uL6-like_a/b-dom_sf"/>
</dbReference>
<dbReference type="InterPro" id="IPR020040">
    <property type="entry name" value="Ribosomal_uL6_a/b-dom"/>
</dbReference>
<dbReference type="InterPro" id="IPR019906">
    <property type="entry name" value="Ribosomal_uL6_bac-type"/>
</dbReference>
<dbReference type="InterPro" id="IPR002358">
    <property type="entry name" value="Ribosomal_uL6_CS"/>
</dbReference>
<dbReference type="NCBIfam" id="TIGR03654">
    <property type="entry name" value="L6_bact"/>
    <property type="match status" value="1"/>
</dbReference>
<dbReference type="PANTHER" id="PTHR11655">
    <property type="entry name" value="60S/50S RIBOSOMAL PROTEIN L6/L9"/>
    <property type="match status" value="1"/>
</dbReference>
<dbReference type="PANTHER" id="PTHR11655:SF14">
    <property type="entry name" value="LARGE RIBOSOMAL SUBUNIT PROTEIN UL6M"/>
    <property type="match status" value="1"/>
</dbReference>
<dbReference type="Pfam" id="PF00347">
    <property type="entry name" value="Ribosomal_L6"/>
    <property type="match status" value="1"/>
</dbReference>
<dbReference type="PIRSF" id="PIRSF002162">
    <property type="entry name" value="Ribosomal_L6"/>
    <property type="match status" value="1"/>
</dbReference>
<dbReference type="PRINTS" id="PR00059">
    <property type="entry name" value="RIBOSOMALL6"/>
</dbReference>
<dbReference type="SUPFAM" id="SSF56053">
    <property type="entry name" value="Ribosomal protein L6"/>
    <property type="match status" value="2"/>
</dbReference>
<dbReference type="PROSITE" id="PS00525">
    <property type="entry name" value="RIBOSOMAL_L6_1"/>
    <property type="match status" value="1"/>
</dbReference>
<keyword id="KW-0687">Ribonucleoprotein</keyword>
<keyword id="KW-0689">Ribosomal protein</keyword>
<keyword id="KW-0694">RNA-binding</keyword>
<keyword id="KW-0699">rRNA-binding</keyword>
<evidence type="ECO:0000255" key="1">
    <source>
        <dbReference type="HAMAP-Rule" id="MF_01365"/>
    </source>
</evidence>
<evidence type="ECO:0000305" key="2"/>
<comment type="function">
    <text evidence="1">This protein binds to the 23S rRNA, and is important in its secondary structure. It is located near the subunit interface in the base of the L7/L12 stalk, and near the tRNA binding site of the peptidyltransferase center.</text>
</comment>
<comment type="subunit">
    <text evidence="1">Part of the 50S ribosomal subunit.</text>
</comment>
<comment type="similarity">
    <text evidence="1">Belongs to the universal ribosomal protein uL6 family.</text>
</comment>
<name>RL6_HELAH</name>
<accession>Q17ZC4</accession>